<gene>
    <name type="primary">petF1</name>
    <name type="synonym">petF</name>
</gene>
<feature type="initiator methionine" description="Removed" evidence="1">
    <location>
        <position position="1"/>
    </location>
</feature>
<feature type="chain" id="PRO_0000189373" description="Ferredoxin-1">
    <location>
        <begin position="2"/>
        <end position="98"/>
    </location>
</feature>
<feature type="domain" description="2Fe-2S ferredoxin-type" evidence="2">
    <location>
        <begin position="4"/>
        <end position="95"/>
    </location>
</feature>
<feature type="binding site" evidence="2">
    <location>
        <position position="41"/>
    </location>
    <ligand>
        <name>[2Fe-2S] cluster</name>
        <dbReference type="ChEBI" id="CHEBI:190135"/>
    </ligand>
</feature>
<feature type="binding site" evidence="2">
    <location>
        <position position="46"/>
    </location>
    <ligand>
        <name>[2Fe-2S] cluster</name>
        <dbReference type="ChEBI" id="CHEBI:190135"/>
    </ligand>
</feature>
<feature type="binding site" evidence="2">
    <location>
        <position position="49"/>
    </location>
    <ligand>
        <name>[2Fe-2S] cluster</name>
        <dbReference type="ChEBI" id="CHEBI:190135"/>
    </ligand>
</feature>
<feature type="binding site" evidence="2">
    <location>
        <position position="79"/>
    </location>
    <ligand>
        <name>[2Fe-2S] cluster</name>
        <dbReference type="ChEBI" id="CHEBI:190135"/>
    </ligand>
</feature>
<sequence>MATYKVTLVRPDGSETTIDVPEDEYILDVAEEQGLDLPFSCRAGACSTCAGKLLEGEVDQSDQSFLDDDQIEKGFVLTCVAYPRSDCKILTNQEEELY</sequence>
<proteinExistence type="inferred from homology"/>
<protein>
    <recommendedName>
        <fullName>Ferredoxin-1</fullName>
    </recommendedName>
    <alternativeName>
        <fullName>Ferredoxin I</fullName>
    </alternativeName>
</protein>
<dbReference type="EMBL" id="Y10288">
    <property type="protein sequence ID" value="CAA71330.1"/>
    <property type="molecule type" value="Genomic_DNA"/>
</dbReference>
<dbReference type="SMR" id="P0A3D0"/>
<dbReference type="GO" id="GO:0051537">
    <property type="term" value="F:2 iron, 2 sulfur cluster binding"/>
    <property type="evidence" value="ECO:0007669"/>
    <property type="project" value="UniProtKB-KW"/>
</dbReference>
<dbReference type="GO" id="GO:0009055">
    <property type="term" value="F:electron transfer activity"/>
    <property type="evidence" value="ECO:0007669"/>
    <property type="project" value="InterPro"/>
</dbReference>
<dbReference type="GO" id="GO:0046872">
    <property type="term" value="F:metal ion binding"/>
    <property type="evidence" value="ECO:0007669"/>
    <property type="project" value="UniProtKB-KW"/>
</dbReference>
<dbReference type="GO" id="GO:0022900">
    <property type="term" value="P:electron transport chain"/>
    <property type="evidence" value="ECO:0007669"/>
    <property type="project" value="InterPro"/>
</dbReference>
<dbReference type="CDD" id="cd00207">
    <property type="entry name" value="fer2"/>
    <property type="match status" value="1"/>
</dbReference>
<dbReference type="FunFam" id="3.10.20.30:FF:000014">
    <property type="entry name" value="Ferredoxin"/>
    <property type="match status" value="1"/>
</dbReference>
<dbReference type="Gene3D" id="3.10.20.30">
    <property type="match status" value="1"/>
</dbReference>
<dbReference type="InterPro" id="IPR036010">
    <property type="entry name" value="2Fe-2S_ferredoxin-like_sf"/>
</dbReference>
<dbReference type="InterPro" id="IPR001041">
    <property type="entry name" value="2Fe-2S_ferredoxin-type"/>
</dbReference>
<dbReference type="InterPro" id="IPR006058">
    <property type="entry name" value="2Fe2S_fd_BS"/>
</dbReference>
<dbReference type="InterPro" id="IPR012675">
    <property type="entry name" value="Beta-grasp_dom_sf"/>
</dbReference>
<dbReference type="InterPro" id="IPR010241">
    <property type="entry name" value="Fd_pln"/>
</dbReference>
<dbReference type="NCBIfam" id="TIGR02008">
    <property type="entry name" value="fdx_plant"/>
    <property type="match status" value="1"/>
</dbReference>
<dbReference type="PANTHER" id="PTHR43112">
    <property type="entry name" value="FERREDOXIN"/>
    <property type="match status" value="1"/>
</dbReference>
<dbReference type="PANTHER" id="PTHR43112:SF3">
    <property type="entry name" value="FERREDOXIN-2, CHLOROPLASTIC"/>
    <property type="match status" value="1"/>
</dbReference>
<dbReference type="Pfam" id="PF00111">
    <property type="entry name" value="Fer2"/>
    <property type="match status" value="1"/>
</dbReference>
<dbReference type="SUPFAM" id="SSF54292">
    <property type="entry name" value="2Fe-2S ferredoxin-like"/>
    <property type="match status" value="1"/>
</dbReference>
<dbReference type="PROSITE" id="PS00197">
    <property type="entry name" value="2FE2S_FER_1"/>
    <property type="match status" value="1"/>
</dbReference>
<dbReference type="PROSITE" id="PS51085">
    <property type="entry name" value="2FE2S_FER_2"/>
    <property type="match status" value="1"/>
</dbReference>
<organism>
    <name type="scientific">Synechococcus elongatus</name>
    <dbReference type="NCBI Taxonomy" id="32046"/>
    <lineage>
        <taxon>Bacteria</taxon>
        <taxon>Bacillati</taxon>
        <taxon>Cyanobacteriota</taxon>
        <taxon>Cyanophyceae</taxon>
        <taxon>Synechococcales</taxon>
        <taxon>Synechococcaceae</taxon>
        <taxon>Synechococcus</taxon>
    </lineage>
</organism>
<name>FER_SYNEL</name>
<accession>P0A3D0</accession>
<accession>P00256</accession>
<accession>P95742</accession>
<reference key="1">
    <citation type="journal article" date="1997" name="Photosyn. Res.">
        <title>Molecular characterization and overexpression of the petF gene from Synechococcus elongatus: evidence for a second site of electrostatic interaction between ferredoxin and the PSI-D subunit.</title>
        <authorList>
            <person name="Floss B."/>
            <person name="Igloi G."/>
            <person name="Cassier-Chauvat C."/>
            <person name="Muehlenhoff U."/>
        </authorList>
    </citation>
    <scope>NUCLEOTIDE SEQUENCE [GENOMIC DNA]</scope>
</reference>
<evidence type="ECO:0000250" key="1"/>
<evidence type="ECO:0000255" key="2">
    <source>
        <dbReference type="PROSITE-ProRule" id="PRU00465"/>
    </source>
</evidence>
<evidence type="ECO:0000305" key="3"/>
<keyword id="KW-0001">2Fe-2S</keyword>
<keyword id="KW-0249">Electron transport</keyword>
<keyword id="KW-0408">Iron</keyword>
<keyword id="KW-0411">Iron-sulfur</keyword>
<keyword id="KW-0479">Metal-binding</keyword>
<keyword id="KW-0813">Transport</keyword>
<comment type="function">
    <text>Ferredoxins are iron-sulfur proteins that transfer electrons in a wide variety of metabolic reactions.</text>
</comment>
<comment type="cofactor">
    <cofactor evidence="1">
        <name>[2Fe-2S] cluster</name>
        <dbReference type="ChEBI" id="CHEBI:190135"/>
    </cofactor>
    <text evidence="1">Binds 1 [2Fe-2S] cluster.</text>
</comment>
<comment type="subunit">
    <text evidence="1">Forms a complex with heterodimeric ferredoxin-thioredoxin reductase (FTR) and thioredoxin.</text>
</comment>
<comment type="similarity">
    <text evidence="3">Belongs to the 2Fe2S plant-type ferredoxin family.</text>
</comment>